<proteinExistence type="inferred from homology"/>
<comment type="function">
    <text evidence="4">Required for glycerol-3-phosphate (G3P) accumulation during systemic acquired resistance (SAR) establishment.</text>
</comment>
<comment type="catalytic activity">
    <reaction evidence="1">
        <text>sn-glycerol 3-phosphate + NAD(+) = dihydroxyacetone phosphate + NADH + H(+)</text>
        <dbReference type="Rhea" id="RHEA:11092"/>
        <dbReference type="ChEBI" id="CHEBI:15378"/>
        <dbReference type="ChEBI" id="CHEBI:57540"/>
        <dbReference type="ChEBI" id="CHEBI:57597"/>
        <dbReference type="ChEBI" id="CHEBI:57642"/>
        <dbReference type="ChEBI" id="CHEBI:57945"/>
        <dbReference type="EC" id="1.1.1.8"/>
    </reaction>
</comment>
<comment type="subunit">
    <text evidence="1">Homodimer.</text>
</comment>
<comment type="subcellular location">
    <subcellularLocation>
        <location evidence="3">Cytoplasm</location>
    </subcellularLocation>
</comment>
<comment type="alternative products">
    <event type="alternative splicing"/>
    <isoform>
        <id>Q9S785-1</id>
        <name>1</name>
        <sequence type="displayed"/>
    </isoform>
    <isoform>
        <id>Q9S785-2</id>
        <name>2</name>
        <sequence type="described" ref="VSP_057920"/>
    </isoform>
</comment>
<comment type="disruption phenotype">
    <text evidence="4">Compromised in systemic acquired resistance (SAR) triggered by Pseudomonas syringae DC3000 avrRpt2 probably because of a reduced accumulation of glycerol-3-phosphate (G3P).</text>
</comment>
<comment type="similarity">
    <text evidence="5">Belongs to the NAD-dependent glycerol-3-phosphate dehydrogenase family.</text>
</comment>
<comment type="sequence caution" evidence="5">
    <conflict type="erroneous initiation">
        <sequence resource="EMBL-CDS" id="AAF13087"/>
    </conflict>
    <text>Truncated N-terminus.</text>
</comment>
<comment type="sequence caution" evidence="5">
    <conflict type="erroneous initiation">
        <sequence resource="EMBL-CDS" id="AAF21179"/>
    </conflict>
    <text>Truncated N-terminus.</text>
</comment>
<organism evidence="9">
    <name type="scientific">Arabidopsis thaliana</name>
    <name type="common">Mouse-ear cress</name>
    <dbReference type="NCBI Taxonomy" id="3702"/>
    <lineage>
        <taxon>Eukaryota</taxon>
        <taxon>Viridiplantae</taxon>
        <taxon>Streptophyta</taxon>
        <taxon>Embryophyta</taxon>
        <taxon>Tracheophyta</taxon>
        <taxon>Spermatophyta</taxon>
        <taxon>Magnoliopsida</taxon>
        <taxon>eudicotyledons</taxon>
        <taxon>Gunneridae</taxon>
        <taxon>Pentapetalae</taxon>
        <taxon>rosids</taxon>
        <taxon>malvids</taxon>
        <taxon>Brassicales</taxon>
        <taxon>Brassicaceae</taxon>
        <taxon>Camelineae</taxon>
        <taxon>Arabidopsis</taxon>
    </lineage>
</organism>
<reference key="1">
    <citation type="journal article" date="2000" name="Nature">
        <title>Sequence and analysis of chromosome 3 of the plant Arabidopsis thaliana.</title>
        <authorList>
            <person name="Salanoubat M."/>
            <person name="Lemcke K."/>
            <person name="Rieger M."/>
            <person name="Ansorge W."/>
            <person name="Unseld M."/>
            <person name="Fartmann B."/>
            <person name="Valle G."/>
            <person name="Bloecker H."/>
            <person name="Perez-Alonso M."/>
            <person name="Obermaier B."/>
            <person name="Delseny M."/>
            <person name="Boutry M."/>
            <person name="Grivell L.A."/>
            <person name="Mache R."/>
            <person name="Puigdomenech P."/>
            <person name="De Simone V."/>
            <person name="Choisne N."/>
            <person name="Artiguenave F."/>
            <person name="Robert C."/>
            <person name="Brottier P."/>
            <person name="Wincker P."/>
            <person name="Cattolico L."/>
            <person name="Weissenbach J."/>
            <person name="Saurin W."/>
            <person name="Quetier F."/>
            <person name="Schaefer M."/>
            <person name="Mueller-Auer S."/>
            <person name="Gabel C."/>
            <person name="Fuchs M."/>
            <person name="Benes V."/>
            <person name="Wurmbach E."/>
            <person name="Drzonek H."/>
            <person name="Erfle H."/>
            <person name="Jordan N."/>
            <person name="Bangert S."/>
            <person name="Wiedelmann R."/>
            <person name="Kranz H."/>
            <person name="Voss H."/>
            <person name="Holland R."/>
            <person name="Brandt P."/>
            <person name="Nyakatura G."/>
            <person name="Vezzi A."/>
            <person name="D'Angelo M."/>
            <person name="Pallavicini A."/>
            <person name="Toppo S."/>
            <person name="Simionati B."/>
            <person name="Conrad A."/>
            <person name="Hornischer K."/>
            <person name="Kauer G."/>
            <person name="Loehnert T.-H."/>
            <person name="Nordsiek G."/>
            <person name="Reichelt J."/>
            <person name="Scharfe M."/>
            <person name="Schoen O."/>
            <person name="Bargues M."/>
            <person name="Terol J."/>
            <person name="Climent J."/>
            <person name="Navarro P."/>
            <person name="Collado C."/>
            <person name="Perez-Perez A."/>
            <person name="Ottenwaelder B."/>
            <person name="Duchemin D."/>
            <person name="Cooke R."/>
            <person name="Laudie M."/>
            <person name="Berger-Llauro C."/>
            <person name="Purnelle B."/>
            <person name="Masuy D."/>
            <person name="de Haan M."/>
            <person name="Maarse A.C."/>
            <person name="Alcaraz J.-P."/>
            <person name="Cottet A."/>
            <person name="Casacuberta E."/>
            <person name="Monfort A."/>
            <person name="Argiriou A."/>
            <person name="Flores M."/>
            <person name="Liguori R."/>
            <person name="Vitale D."/>
            <person name="Mannhaupt G."/>
            <person name="Haase D."/>
            <person name="Schoof H."/>
            <person name="Rudd S."/>
            <person name="Zaccaria P."/>
            <person name="Mewes H.-W."/>
            <person name="Mayer K.F.X."/>
            <person name="Kaul S."/>
            <person name="Town C.D."/>
            <person name="Koo H.L."/>
            <person name="Tallon L.J."/>
            <person name="Jenkins J."/>
            <person name="Rooney T."/>
            <person name="Rizzo M."/>
            <person name="Walts A."/>
            <person name="Utterback T."/>
            <person name="Fujii C.Y."/>
            <person name="Shea T.P."/>
            <person name="Creasy T.H."/>
            <person name="Haas B."/>
            <person name="Maiti R."/>
            <person name="Wu D."/>
            <person name="Peterson J."/>
            <person name="Van Aken S."/>
            <person name="Pai G."/>
            <person name="Militscher J."/>
            <person name="Sellers P."/>
            <person name="Gill J.E."/>
            <person name="Feldblyum T.V."/>
            <person name="Preuss D."/>
            <person name="Lin X."/>
            <person name="Nierman W.C."/>
            <person name="Salzberg S.L."/>
            <person name="White O."/>
            <person name="Venter J.C."/>
            <person name="Fraser C.M."/>
            <person name="Kaneko T."/>
            <person name="Nakamura Y."/>
            <person name="Sato S."/>
            <person name="Kato T."/>
            <person name="Asamizu E."/>
            <person name="Sasamoto S."/>
            <person name="Kimura T."/>
            <person name="Idesawa K."/>
            <person name="Kawashima K."/>
            <person name="Kishida Y."/>
            <person name="Kiyokawa C."/>
            <person name="Kohara M."/>
            <person name="Matsumoto M."/>
            <person name="Matsuno A."/>
            <person name="Muraki A."/>
            <person name="Nakayama S."/>
            <person name="Nakazaki N."/>
            <person name="Shinpo S."/>
            <person name="Takeuchi C."/>
            <person name="Wada T."/>
            <person name="Watanabe A."/>
            <person name="Yamada M."/>
            <person name="Yasuda M."/>
            <person name="Tabata S."/>
        </authorList>
    </citation>
    <scope>NUCLEOTIDE SEQUENCE [LARGE SCALE GENOMIC DNA]</scope>
    <source>
        <strain>cv. Columbia</strain>
    </source>
</reference>
<reference key="2">
    <citation type="journal article" date="2017" name="Plant J.">
        <title>Araport11: a complete reannotation of the Arabidopsis thaliana reference genome.</title>
        <authorList>
            <person name="Cheng C.Y."/>
            <person name="Krishnakumar V."/>
            <person name="Chan A.P."/>
            <person name="Thibaud-Nissen F."/>
            <person name="Schobel S."/>
            <person name="Town C.D."/>
        </authorList>
    </citation>
    <scope>GENOME REANNOTATION</scope>
    <source>
        <strain>cv. Columbia</strain>
    </source>
</reference>
<reference key="3">
    <citation type="journal article" date="2011" name="Nat. Genet.">
        <title>Glycerol-3-phosphate is a critical mobile inducer of systemic immunity in plants.</title>
        <authorList>
            <person name="Chanda B."/>
            <person name="Xia Y."/>
            <person name="Mandal M.K."/>
            <person name="Yu K."/>
            <person name="Sekine K.T."/>
            <person name="Gao Q.M."/>
            <person name="Selote D."/>
            <person name="Hu Y."/>
            <person name="Stromberg A."/>
            <person name="Navarre D."/>
            <person name="Kachroo A."/>
            <person name="Kachroo P."/>
        </authorList>
    </citation>
    <scope>FUNCTION</scope>
    <scope>DISRUPTION PHENOTYPE</scope>
    <source>
        <strain>cv. Columbia</strain>
    </source>
</reference>
<keyword id="KW-0025">Alternative splicing</keyword>
<keyword id="KW-0963">Cytoplasm</keyword>
<keyword id="KW-0520">NAD</keyword>
<keyword id="KW-0560">Oxidoreductase</keyword>
<keyword id="KW-0611">Plant defense</keyword>
<keyword id="KW-1185">Reference proteome</keyword>
<keyword id="KW-0346">Stress response</keyword>
<sequence>MMDHLVETNSVPSRLVEERLDEIRRVMGKADDDPLRIVGVGAGAWGSVFIAMLQENYGKFRGKVSVRIWRRGGRAIDKATAEHLFEVINSREELLRRLIRRCAYLKYVEARLGDRVLYADEILKDGFCLNMIETPLCPLKVVTNLQEAVWDADIVINGLPSTETFQVFNEISKYWKERVNAPVIISLAKGVEAEFEPHPRIVTPTQMIHRATGIPLENILYLGGPNIASEVYNKEYANARICGSEKWRKPLGKFLRQSHFIVWDNSDLITHEVMGGLKNVYAIGAGMVATLTKESATSKSVYFAHCTSEMIFITHLLAKEPEKLAGPLLADTYVTLLKGRNAWYGQKLAKGELSLEMGDSIKGKGMIQGVSAVKAFFELLNQSSLSLQHPEEGKPVTPAELCPILKMLYRILITREFSCEAILEALRDETMNDPRELIEIAHSHLFFQPWLLGQKP</sequence>
<evidence type="ECO:0000250" key="1">
    <source>
        <dbReference type="UniProtKB" id="P21695"/>
    </source>
</evidence>
<evidence type="ECO:0000250" key="2">
    <source>
        <dbReference type="UniProtKB" id="P90551"/>
    </source>
</evidence>
<evidence type="ECO:0000250" key="3">
    <source>
        <dbReference type="UniProtKB" id="Q8N335"/>
    </source>
</evidence>
<evidence type="ECO:0000269" key="4">
    <source>
    </source>
</evidence>
<evidence type="ECO:0000305" key="5"/>
<evidence type="ECO:0000312" key="6">
    <source>
        <dbReference type="EMBL" id="AAF13087.1"/>
    </source>
</evidence>
<evidence type="ECO:0000312" key="7">
    <source>
        <dbReference type="EMBL" id="AAF21179.1"/>
    </source>
</evidence>
<evidence type="ECO:0000312" key="8">
    <source>
        <dbReference type="EMBL" id="AEE74587.1"/>
    </source>
</evidence>
<evidence type="ECO:0000312" key="9">
    <source>
        <dbReference type="Proteomes" id="UP000006548"/>
    </source>
</evidence>
<dbReference type="EC" id="1.1.1.8"/>
<dbReference type="EMBL" id="AC009176">
    <property type="protein sequence ID" value="AAF13087.1"/>
    <property type="status" value="ALT_INIT"/>
    <property type="molecule type" value="Genomic_DNA"/>
</dbReference>
<dbReference type="EMBL" id="AC013483">
    <property type="protein sequence ID" value="AAF21179.1"/>
    <property type="status" value="ALT_INIT"/>
    <property type="molecule type" value="Genomic_DNA"/>
</dbReference>
<dbReference type="EMBL" id="CP002686">
    <property type="protein sequence ID" value="AEE74587.1"/>
    <property type="molecule type" value="Genomic_DNA"/>
</dbReference>
<dbReference type="EMBL" id="CP002686">
    <property type="protein sequence ID" value="ANM65682.1"/>
    <property type="molecule type" value="Genomic_DNA"/>
</dbReference>
<dbReference type="RefSeq" id="NP_001327632.1">
    <molecule id="Q9S785-1"/>
    <property type="nucleotide sequence ID" value="NM_001337728.1"/>
</dbReference>
<dbReference type="RefSeq" id="NP_187426.3">
    <molecule id="Q9S785-2"/>
    <property type="nucleotide sequence ID" value="NM_111648.6"/>
</dbReference>
<dbReference type="SMR" id="Q9S785"/>
<dbReference type="FunCoup" id="Q9S785">
    <property type="interactions" value="157"/>
</dbReference>
<dbReference type="STRING" id="3702.Q9S785"/>
<dbReference type="GlyGen" id="Q9S785">
    <property type="glycosylation" value="1 site"/>
</dbReference>
<dbReference type="iPTMnet" id="Q9S785"/>
<dbReference type="PaxDb" id="3702-AT3G07690.1"/>
<dbReference type="ProteomicsDB" id="247027">
    <molecule id="Q9S785-1"/>
</dbReference>
<dbReference type="EnsemblPlants" id="AT3G07690.1">
    <molecule id="Q9S785-2"/>
    <property type="protein sequence ID" value="AT3G07690.1"/>
    <property type="gene ID" value="AT3G07690"/>
</dbReference>
<dbReference type="EnsemblPlants" id="AT3G07690.2">
    <molecule id="Q9S785-1"/>
    <property type="protein sequence ID" value="AT3G07690.2"/>
    <property type="gene ID" value="AT3G07690"/>
</dbReference>
<dbReference type="GeneID" id="819960"/>
<dbReference type="Gramene" id="AT3G07690.1">
    <molecule id="Q9S785-2"/>
    <property type="protein sequence ID" value="AT3G07690.1"/>
    <property type="gene ID" value="AT3G07690"/>
</dbReference>
<dbReference type="Gramene" id="AT3G07690.2">
    <molecule id="Q9S785-1"/>
    <property type="protein sequence ID" value="AT3G07690.2"/>
    <property type="gene ID" value="AT3G07690"/>
</dbReference>
<dbReference type="KEGG" id="ath:AT3G07690"/>
<dbReference type="Araport" id="AT3G07690"/>
<dbReference type="TAIR" id="AT3G07690"/>
<dbReference type="eggNOG" id="KOG2711">
    <property type="taxonomic scope" value="Eukaryota"/>
</dbReference>
<dbReference type="InParanoid" id="Q9S785"/>
<dbReference type="OMA" id="CINMIDT"/>
<dbReference type="BioCyc" id="ARA:AT3G07690-MONOMER"/>
<dbReference type="PRO" id="PR:Q9S785"/>
<dbReference type="Proteomes" id="UP000006548">
    <property type="component" value="Chromosome 3"/>
</dbReference>
<dbReference type="ExpressionAtlas" id="Q9S785">
    <property type="expression patterns" value="baseline and differential"/>
</dbReference>
<dbReference type="GO" id="GO:0005737">
    <property type="term" value="C:cytoplasm"/>
    <property type="evidence" value="ECO:0007669"/>
    <property type="project" value="UniProtKB-SubCell"/>
</dbReference>
<dbReference type="GO" id="GO:0141152">
    <property type="term" value="F:glycerol-3-phosphate dehydrogenase (NAD+) activity"/>
    <property type="evidence" value="ECO:0007669"/>
    <property type="project" value="UniProtKB-EC"/>
</dbReference>
<dbReference type="GO" id="GO:0051287">
    <property type="term" value="F:NAD binding"/>
    <property type="evidence" value="ECO:0007669"/>
    <property type="project" value="InterPro"/>
</dbReference>
<dbReference type="GO" id="GO:0005975">
    <property type="term" value="P:carbohydrate metabolic process"/>
    <property type="evidence" value="ECO:0007669"/>
    <property type="project" value="InterPro"/>
</dbReference>
<dbReference type="GO" id="GO:0046168">
    <property type="term" value="P:glycerol-3-phosphate catabolic process"/>
    <property type="evidence" value="ECO:0007669"/>
    <property type="project" value="InterPro"/>
</dbReference>
<dbReference type="GO" id="GO:0009627">
    <property type="term" value="P:systemic acquired resistance"/>
    <property type="evidence" value="ECO:0000315"/>
    <property type="project" value="TAIR"/>
</dbReference>
<dbReference type="FunFam" id="1.10.1040.10:FF:000012">
    <property type="entry name" value="Glycerol-3-phosphate dehydrogenase [NAD(+)]"/>
    <property type="match status" value="1"/>
</dbReference>
<dbReference type="FunFam" id="3.40.50.720:FF:000109">
    <property type="entry name" value="Glycerol-3-phosphate dehydrogenase [NAD(+)]"/>
    <property type="match status" value="1"/>
</dbReference>
<dbReference type="Gene3D" id="1.10.1040.10">
    <property type="entry name" value="N-(1-d-carboxylethyl)-l-norvaline Dehydrogenase, domain 2"/>
    <property type="match status" value="1"/>
</dbReference>
<dbReference type="Gene3D" id="3.40.50.720">
    <property type="entry name" value="NAD(P)-binding Rossmann-like Domain"/>
    <property type="match status" value="2"/>
</dbReference>
<dbReference type="InterPro" id="IPR008927">
    <property type="entry name" value="6-PGluconate_DH-like_C_sf"/>
</dbReference>
<dbReference type="InterPro" id="IPR013328">
    <property type="entry name" value="6PGD_dom2"/>
</dbReference>
<dbReference type="InterPro" id="IPR006168">
    <property type="entry name" value="G3P_DH_NAD-dep"/>
</dbReference>
<dbReference type="InterPro" id="IPR006109">
    <property type="entry name" value="G3P_DH_NAD-dep_C"/>
</dbReference>
<dbReference type="InterPro" id="IPR011128">
    <property type="entry name" value="G3P_DH_NAD-dep_N"/>
</dbReference>
<dbReference type="InterPro" id="IPR036291">
    <property type="entry name" value="NAD(P)-bd_dom_sf"/>
</dbReference>
<dbReference type="PANTHER" id="PTHR11728">
    <property type="entry name" value="GLYCEROL-3-PHOSPHATE DEHYDROGENASE"/>
    <property type="match status" value="1"/>
</dbReference>
<dbReference type="PANTHER" id="PTHR11728:SF33">
    <property type="entry name" value="GLYCEROL-3-PHOSPHATE DEHYDROGENASE [NAD(+)]"/>
    <property type="match status" value="1"/>
</dbReference>
<dbReference type="Pfam" id="PF07479">
    <property type="entry name" value="NAD_Gly3P_dh_C"/>
    <property type="match status" value="1"/>
</dbReference>
<dbReference type="Pfam" id="PF01210">
    <property type="entry name" value="NAD_Gly3P_dh_N"/>
    <property type="match status" value="1"/>
</dbReference>
<dbReference type="PRINTS" id="PR00077">
    <property type="entry name" value="GPDHDRGNASE"/>
</dbReference>
<dbReference type="SUPFAM" id="SSF48179">
    <property type="entry name" value="6-phosphogluconate dehydrogenase C-terminal domain-like"/>
    <property type="match status" value="1"/>
</dbReference>
<dbReference type="SUPFAM" id="SSF51735">
    <property type="entry name" value="NAD(P)-binding Rossmann-fold domains"/>
    <property type="match status" value="1"/>
</dbReference>
<feature type="chain" id="PRO_0000434271" description="Glycerol-3-phosphate dehydrogenase [NAD(+)] At3g07690, cytosolic">
    <location>
        <begin position="1"/>
        <end position="456"/>
    </location>
</feature>
<feature type="active site" description="Proton acceptor" evidence="1">
    <location>
        <position position="278"/>
    </location>
</feature>
<feature type="binding site" evidence="1">
    <location>
        <begin position="41"/>
        <end position="46"/>
    </location>
    <ligand>
        <name>NAD(+)</name>
        <dbReference type="ChEBI" id="CHEBI:57540"/>
    </ligand>
</feature>
<feature type="binding site" evidence="2">
    <location>
        <position position="189"/>
    </location>
    <ligand>
        <name>NAD(+)</name>
        <dbReference type="ChEBI" id="CHEBI:57540"/>
    </ligand>
</feature>
<feature type="binding site" evidence="1">
    <location>
        <position position="189"/>
    </location>
    <ligand>
        <name>substrate</name>
    </ligand>
</feature>
<feature type="binding site" evidence="1">
    <location>
        <position position="228"/>
    </location>
    <ligand>
        <name>NAD(+)</name>
        <dbReference type="ChEBI" id="CHEBI:57540"/>
    </ligand>
</feature>
<feature type="binding site" evidence="1">
    <location>
        <begin position="340"/>
        <end position="341"/>
    </location>
    <ligand>
        <name>substrate</name>
    </ligand>
</feature>
<feature type="binding site" evidence="1">
    <location>
        <position position="340"/>
    </location>
    <ligand>
        <name>NAD(+)</name>
        <dbReference type="ChEBI" id="CHEBI:57540"/>
    </ligand>
</feature>
<feature type="binding site" evidence="1">
    <location>
        <position position="368"/>
    </location>
    <ligand>
        <name>NAD(+)</name>
        <dbReference type="ChEBI" id="CHEBI:57540"/>
    </ligand>
</feature>
<feature type="splice variant" id="VSP_057920" description="In isoform 2.">
    <original>A</original>
    <variation>AVFVLAFLYST</variation>
    <location>
        <position position="285"/>
    </location>
</feature>
<protein>
    <recommendedName>
        <fullName>Glycerol-3-phosphate dehydrogenase [NAD(+)] At3g07690, cytosolic</fullName>
        <shortName>G3Pdh(At3g07690)</shortName>
        <ecNumber>1.1.1.8</ecNumber>
    </recommendedName>
</protein>
<accession>Q9S785</accession>
<accession>F4JFL8</accession>
<gene>
    <name evidence="8" type="ordered locus">At3g07690</name>
    <name evidence="7" type="ORF">F17A17.3</name>
    <name evidence="6" type="ORF">MLP3.14</name>
</gene>
<name>GPDH2_ARATH</name>